<comment type="subcellular location">
    <subcellularLocation>
        <location>Plastid</location>
        <location>Chloroplast</location>
    </subcellularLocation>
</comment>
<comment type="similarity">
    <text evidence="1">Belongs to the ycf20 family.</text>
</comment>
<accession>O78445</accession>
<keyword id="KW-0150">Chloroplast</keyword>
<keyword id="KW-0934">Plastid</keyword>
<protein>
    <recommendedName>
        <fullName>Uncharacterized protein ycf20</fullName>
    </recommendedName>
</protein>
<name>YCF20_GUITH</name>
<evidence type="ECO:0000305" key="1"/>
<sequence length="64" mass="7234">MRLFFYNLLTILFGFFLSTLLSTILSQTGDWSILAASILVATIELINKNKYKKKPLIIGLVLTI</sequence>
<feature type="chain" id="PRO_0000217326" description="Uncharacterized protein ycf20">
    <location>
        <begin position="1"/>
        <end position="64"/>
    </location>
</feature>
<gene>
    <name type="primary">ycf20</name>
</gene>
<proteinExistence type="inferred from homology"/>
<organism>
    <name type="scientific">Guillardia theta</name>
    <name type="common">Cryptophyte</name>
    <name type="synonym">Cryptomonas phi</name>
    <dbReference type="NCBI Taxonomy" id="55529"/>
    <lineage>
        <taxon>Eukaryota</taxon>
        <taxon>Cryptophyceae</taxon>
        <taxon>Pyrenomonadales</taxon>
        <taxon>Geminigeraceae</taxon>
        <taxon>Guillardia</taxon>
    </lineage>
</organism>
<reference key="1">
    <citation type="journal article" date="1999" name="J. Mol. Evol.">
        <title>The plastid genome of the cryptophyte alga, Guillardia theta: complete sequence and conserved synteny groups confirm its common ancestry with red algae.</title>
        <authorList>
            <person name="Douglas S.E."/>
            <person name="Penny S.L."/>
        </authorList>
    </citation>
    <scope>NUCLEOTIDE SEQUENCE [LARGE SCALE GENOMIC DNA]</scope>
</reference>
<dbReference type="EMBL" id="AF041468">
    <property type="protein sequence ID" value="AAC35632.1"/>
    <property type="molecule type" value="Genomic_DNA"/>
</dbReference>
<dbReference type="RefSeq" id="NP_050698.1">
    <property type="nucleotide sequence ID" value="NC_000926.1"/>
</dbReference>
<dbReference type="GeneID" id="856989"/>
<dbReference type="HOGENOM" id="CLU_2872380_0_0_1"/>
<dbReference type="GO" id="GO:0009507">
    <property type="term" value="C:chloroplast"/>
    <property type="evidence" value="ECO:0007669"/>
    <property type="project" value="UniProtKB-SubCell"/>
</dbReference>
<dbReference type="InterPro" id="IPR007572">
    <property type="entry name" value="Uncharacterised_Ycf20"/>
</dbReference>
<dbReference type="PANTHER" id="PTHR33787">
    <property type="match status" value="1"/>
</dbReference>
<dbReference type="PANTHER" id="PTHR33787:SF4">
    <property type="entry name" value="YCF20-LIKE PROTEIN"/>
    <property type="match status" value="1"/>
</dbReference>
<geneLocation type="chloroplast"/>